<keyword id="KW-0963">Cytoplasm</keyword>
<keyword id="KW-0342">GTP-binding</keyword>
<keyword id="KW-0396">Initiation factor</keyword>
<keyword id="KW-0547">Nucleotide-binding</keyword>
<keyword id="KW-0648">Protein biosynthesis</keyword>
<keyword id="KW-1185">Reference proteome</keyword>
<organism>
    <name type="scientific">Micrococcus luteus (strain ATCC 4698 / DSM 20030 / JCM 1464 / CCM 169 / CCUG 5858 / IAM 1056 / NBRC 3333 / NCIMB 9278 / NCTC 2665 / VKM Ac-2230)</name>
    <name type="common">Micrococcus lysodeikticus</name>
    <dbReference type="NCBI Taxonomy" id="465515"/>
    <lineage>
        <taxon>Bacteria</taxon>
        <taxon>Bacillati</taxon>
        <taxon>Actinomycetota</taxon>
        <taxon>Actinomycetes</taxon>
        <taxon>Micrococcales</taxon>
        <taxon>Micrococcaceae</taxon>
        <taxon>Micrococcus</taxon>
    </lineage>
</organism>
<gene>
    <name evidence="2" type="primary">infB</name>
    <name type="ordered locus">Mlut_07010</name>
</gene>
<evidence type="ECO:0000250" key="1"/>
<evidence type="ECO:0000255" key="2">
    <source>
        <dbReference type="HAMAP-Rule" id="MF_00100"/>
    </source>
</evidence>
<evidence type="ECO:0000256" key="3">
    <source>
        <dbReference type="SAM" id="MobiDB-lite"/>
    </source>
</evidence>
<name>IF2_MICLC</name>
<reference key="1">
    <citation type="journal article" date="2010" name="J. Bacteriol.">
        <title>Genome sequence of the Fleming strain of Micrococcus luteus, a simple free-living actinobacterium.</title>
        <authorList>
            <person name="Young M."/>
            <person name="Artsatbanov V."/>
            <person name="Beller H.R."/>
            <person name="Chandra G."/>
            <person name="Chater K.F."/>
            <person name="Dover L.G."/>
            <person name="Goh E.B."/>
            <person name="Kahan T."/>
            <person name="Kaprelyants A.S."/>
            <person name="Kyrpides N."/>
            <person name="Lapidus A."/>
            <person name="Lowry S.R."/>
            <person name="Lykidis A."/>
            <person name="Mahillon J."/>
            <person name="Markowitz V."/>
            <person name="Mavromatis K."/>
            <person name="Mukamolova G.V."/>
            <person name="Oren A."/>
            <person name="Rokem J.S."/>
            <person name="Smith M.C."/>
            <person name="Young D.I."/>
            <person name="Greenblatt C.L."/>
        </authorList>
    </citation>
    <scope>NUCLEOTIDE SEQUENCE [LARGE SCALE GENOMIC DNA]</scope>
    <source>
        <strain>ATCC 4698 / DSM 20030 / JCM 1464 / CCM 169 / CCUG 5858 / IAM 1056 / NBRC 3333 / NCIMB 9278 / NCTC 2665 / VKM Ac-2230</strain>
    </source>
</reference>
<feature type="chain" id="PRO_1000202780" description="Translation initiation factor IF-2">
    <location>
        <begin position="1"/>
        <end position="930"/>
    </location>
</feature>
<feature type="domain" description="tr-type G">
    <location>
        <begin position="422"/>
        <end position="596"/>
    </location>
</feature>
<feature type="region of interest" description="Disordered" evidence="3">
    <location>
        <begin position="51"/>
        <end position="325"/>
    </location>
</feature>
<feature type="region of interest" description="G1" evidence="1">
    <location>
        <begin position="431"/>
        <end position="438"/>
    </location>
</feature>
<feature type="region of interest" description="G2" evidence="1">
    <location>
        <begin position="456"/>
        <end position="460"/>
    </location>
</feature>
<feature type="region of interest" description="G3" evidence="1">
    <location>
        <begin position="481"/>
        <end position="484"/>
    </location>
</feature>
<feature type="region of interest" description="G4" evidence="1">
    <location>
        <begin position="535"/>
        <end position="538"/>
    </location>
</feature>
<feature type="region of interest" description="G5" evidence="1">
    <location>
        <begin position="571"/>
        <end position="573"/>
    </location>
</feature>
<feature type="compositionally biased region" description="Low complexity" evidence="3">
    <location>
        <begin position="56"/>
        <end position="111"/>
    </location>
</feature>
<feature type="compositionally biased region" description="Low complexity" evidence="3">
    <location>
        <begin position="121"/>
        <end position="162"/>
    </location>
</feature>
<feature type="compositionally biased region" description="Gly residues" evidence="3">
    <location>
        <begin position="263"/>
        <end position="295"/>
    </location>
</feature>
<feature type="compositionally biased region" description="Basic residues" evidence="3">
    <location>
        <begin position="296"/>
        <end position="307"/>
    </location>
</feature>
<feature type="compositionally biased region" description="Basic and acidic residues" evidence="3">
    <location>
        <begin position="308"/>
        <end position="320"/>
    </location>
</feature>
<feature type="binding site" evidence="2">
    <location>
        <begin position="431"/>
        <end position="438"/>
    </location>
    <ligand>
        <name>GTP</name>
        <dbReference type="ChEBI" id="CHEBI:37565"/>
    </ligand>
</feature>
<feature type="binding site" evidence="2">
    <location>
        <begin position="481"/>
        <end position="485"/>
    </location>
    <ligand>
        <name>GTP</name>
        <dbReference type="ChEBI" id="CHEBI:37565"/>
    </ligand>
</feature>
<feature type="binding site" evidence="2">
    <location>
        <begin position="535"/>
        <end position="538"/>
    </location>
    <ligand>
        <name>GTP</name>
        <dbReference type="ChEBI" id="CHEBI:37565"/>
    </ligand>
</feature>
<protein>
    <recommendedName>
        <fullName evidence="2">Translation initiation factor IF-2</fullName>
    </recommendedName>
</protein>
<sequence>MAKVRVHELAKELGITSKEALSTLKDLGEFVSSASSTIEPPVVKKLRSAYPGAGKSAAKPGSTPAAPAAGRSAAPKPAAAPSPRAVAPTSDAGAPAPGPAAGRTAATKPGVAPTPGPAAPTPAAQVPAEPKAPQPSATPGSAAPKPGAAAPKPGAPRPGNNPFSPKGGSAGSRPGARPGGRGGAPRPGNNPFAPSQGMRSGREDRAPRPGGPRPPAGAGGPRPGGPRPAAGAGGPRPGGPRPNPGMMPKQITPAPQPARGRGRPGGGPGGGPGRPGGPGGRGGRGNAQGAFGRGGGPRKGRKSKRAKRQEFEQQHTREIGGVKVPKGDGTTVLRLRRGASLADFAEKIRADVADLVKVLFTLGEMASANQSLDEETFQLLGDELGYKVQIVSPEDEDKELLEAFDIDLEAEEANEDEADLEPRPAVVTVMGHVDHGKTRLLDAIRSSNVIEGEAGGITQHIGAYQVPVEHEGEQRRLTFIDTPGHEAFTAMRARGAKVTDIAVLVVAADDGVMPQTVEALNHAQSAGVPIVVAVNKIDKDTAAPDKIRGQLTEYGLVPEEYGGDTMFVDVSARNNINIDQLLEAILLTADAALELTANPHKAARGVAIEANLDKGRGAVVTVLVQTGTLRVGDTMVVGSAHGRVRAMFDENGNAVEAADPSRPVQVLGLSSVPRAGDSFLVTDDERTARQIAERREAADRNAQLAKRRKRITLEDFDQAVAEGKLDTLNLIIKGDASGAVEALEDSLLKIEVGEDEVQLRVIHRGVGAITQNDVNLATVDNAIIIGFNVRPAERVADLADREGVDMRFYNVIYDAIDDIENALKGMLKPEYEEVELGSAEVREVFRSSKWGNIAGSLVRSGLIRRNAQARLVRDGVVVSEHLRIESLRRFKEDATEVREGYECGIGLGSFNDIKEGDVIETFEMQEKPRV</sequence>
<proteinExistence type="inferred from homology"/>
<accession>C5C9T1</accession>
<comment type="function">
    <text evidence="2">One of the essential components for the initiation of protein synthesis. Protects formylmethionyl-tRNA from spontaneous hydrolysis and promotes its binding to the 30S ribosomal subunits. Also involved in the hydrolysis of GTP during the formation of the 70S ribosomal complex.</text>
</comment>
<comment type="subcellular location">
    <subcellularLocation>
        <location evidence="2">Cytoplasm</location>
    </subcellularLocation>
</comment>
<comment type="similarity">
    <text evidence="2">Belongs to the TRAFAC class translation factor GTPase superfamily. Classic translation factor GTPase family. IF-2 subfamily.</text>
</comment>
<dbReference type="EMBL" id="CP001628">
    <property type="protein sequence ID" value="ACS30233.1"/>
    <property type="molecule type" value="Genomic_DNA"/>
</dbReference>
<dbReference type="RefSeq" id="WP_012750791.1">
    <property type="nucleotide sequence ID" value="NC_012803.1"/>
</dbReference>
<dbReference type="SMR" id="C5C9T1"/>
<dbReference type="STRING" id="465515.Mlut_07010"/>
<dbReference type="EnsemblBacteria" id="ACS30233">
    <property type="protein sequence ID" value="ACS30233"/>
    <property type="gene ID" value="Mlut_07010"/>
</dbReference>
<dbReference type="GeneID" id="93344866"/>
<dbReference type="KEGG" id="mlu:Mlut_07010"/>
<dbReference type="PATRIC" id="fig|465515.4.peg.664"/>
<dbReference type="eggNOG" id="COG0532">
    <property type="taxonomic scope" value="Bacteria"/>
</dbReference>
<dbReference type="HOGENOM" id="CLU_006301_9_1_11"/>
<dbReference type="Proteomes" id="UP000000738">
    <property type="component" value="Chromosome"/>
</dbReference>
<dbReference type="GO" id="GO:0005829">
    <property type="term" value="C:cytosol"/>
    <property type="evidence" value="ECO:0007669"/>
    <property type="project" value="TreeGrafter"/>
</dbReference>
<dbReference type="GO" id="GO:0005525">
    <property type="term" value="F:GTP binding"/>
    <property type="evidence" value="ECO:0007669"/>
    <property type="project" value="UniProtKB-KW"/>
</dbReference>
<dbReference type="GO" id="GO:0003924">
    <property type="term" value="F:GTPase activity"/>
    <property type="evidence" value="ECO:0007669"/>
    <property type="project" value="UniProtKB-UniRule"/>
</dbReference>
<dbReference type="GO" id="GO:0003743">
    <property type="term" value="F:translation initiation factor activity"/>
    <property type="evidence" value="ECO:0007669"/>
    <property type="project" value="UniProtKB-UniRule"/>
</dbReference>
<dbReference type="CDD" id="cd01887">
    <property type="entry name" value="IF2_eIF5B"/>
    <property type="match status" value="1"/>
</dbReference>
<dbReference type="CDD" id="cd03702">
    <property type="entry name" value="IF2_mtIF2_II"/>
    <property type="match status" value="1"/>
</dbReference>
<dbReference type="CDD" id="cd03692">
    <property type="entry name" value="mtIF2_IVc"/>
    <property type="match status" value="1"/>
</dbReference>
<dbReference type="FunFam" id="2.40.30.10:FF:000007">
    <property type="entry name" value="Translation initiation factor IF-2"/>
    <property type="match status" value="1"/>
</dbReference>
<dbReference type="FunFam" id="2.40.30.10:FF:000008">
    <property type="entry name" value="Translation initiation factor IF-2"/>
    <property type="match status" value="1"/>
</dbReference>
<dbReference type="FunFam" id="3.40.50.10050:FF:000001">
    <property type="entry name" value="Translation initiation factor IF-2"/>
    <property type="match status" value="1"/>
</dbReference>
<dbReference type="FunFam" id="3.40.50.300:FF:000019">
    <property type="entry name" value="Translation initiation factor IF-2"/>
    <property type="match status" value="1"/>
</dbReference>
<dbReference type="Gene3D" id="1.10.10.2480">
    <property type="match status" value="1"/>
</dbReference>
<dbReference type="Gene3D" id="3.40.50.300">
    <property type="entry name" value="P-loop containing nucleotide triphosphate hydrolases"/>
    <property type="match status" value="1"/>
</dbReference>
<dbReference type="Gene3D" id="2.40.30.10">
    <property type="entry name" value="Translation factors"/>
    <property type="match status" value="2"/>
</dbReference>
<dbReference type="Gene3D" id="3.40.50.10050">
    <property type="entry name" value="Translation initiation factor IF- 2, domain 3"/>
    <property type="match status" value="1"/>
</dbReference>
<dbReference type="HAMAP" id="MF_00100_B">
    <property type="entry name" value="IF_2_B"/>
    <property type="match status" value="1"/>
</dbReference>
<dbReference type="InterPro" id="IPR053905">
    <property type="entry name" value="EF-G-like_DII"/>
</dbReference>
<dbReference type="InterPro" id="IPR044145">
    <property type="entry name" value="IF2_II"/>
</dbReference>
<dbReference type="InterPro" id="IPR006847">
    <property type="entry name" value="IF2_N"/>
</dbReference>
<dbReference type="InterPro" id="IPR027417">
    <property type="entry name" value="P-loop_NTPase"/>
</dbReference>
<dbReference type="InterPro" id="IPR005225">
    <property type="entry name" value="Small_GTP-bd"/>
</dbReference>
<dbReference type="InterPro" id="IPR000795">
    <property type="entry name" value="T_Tr_GTP-bd_dom"/>
</dbReference>
<dbReference type="InterPro" id="IPR000178">
    <property type="entry name" value="TF_IF2_bacterial-like"/>
</dbReference>
<dbReference type="InterPro" id="IPR015760">
    <property type="entry name" value="TIF_IF2"/>
</dbReference>
<dbReference type="InterPro" id="IPR023115">
    <property type="entry name" value="TIF_IF2_dom3"/>
</dbReference>
<dbReference type="InterPro" id="IPR036925">
    <property type="entry name" value="TIF_IF2_dom3_sf"/>
</dbReference>
<dbReference type="InterPro" id="IPR009000">
    <property type="entry name" value="Transl_B-barrel_sf"/>
</dbReference>
<dbReference type="NCBIfam" id="TIGR00487">
    <property type="entry name" value="IF-2"/>
    <property type="match status" value="1"/>
</dbReference>
<dbReference type="NCBIfam" id="TIGR00231">
    <property type="entry name" value="small_GTP"/>
    <property type="match status" value="1"/>
</dbReference>
<dbReference type="PANTHER" id="PTHR43381:SF5">
    <property type="entry name" value="TR-TYPE G DOMAIN-CONTAINING PROTEIN"/>
    <property type="match status" value="1"/>
</dbReference>
<dbReference type="PANTHER" id="PTHR43381">
    <property type="entry name" value="TRANSLATION INITIATION FACTOR IF-2-RELATED"/>
    <property type="match status" value="1"/>
</dbReference>
<dbReference type="Pfam" id="PF22042">
    <property type="entry name" value="EF-G_D2"/>
    <property type="match status" value="1"/>
</dbReference>
<dbReference type="Pfam" id="PF00009">
    <property type="entry name" value="GTP_EFTU"/>
    <property type="match status" value="1"/>
</dbReference>
<dbReference type="Pfam" id="PF11987">
    <property type="entry name" value="IF-2"/>
    <property type="match status" value="1"/>
</dbReference>
<dbReference type="Pfam" id="PF04760">
    <property type="entry name" value="IF2_N"/>
    <property type="match status" value="2"/>
</dbReference>
<dbReference type="PRINTS" id="PR00315">
    <property type="entry name" value="ELONGATNFCT"/>
</dbReference>
<dbReference type="SUPFAM" id="SSF52156">
    <property type="entry name" value="Initiation factor IF2/eIF5b, domain 3"/>
    <property type="match status" value="1"/>
</dbReference>
<dbReference type="SUPFAM" id="SSF52540">
    <property type="entry name" value="P-loop containing nucleoside triphosphate hydrolases"/>
    <property type="match status" value="1"/>
</dbReference>
<dbReference type="SUPFAM" id="SSF50447">
    <property type="entry name" value="Translation proteins"/>
    <property type="match status" value="2"/>
</dbReference>
<dbReference type="PROSITE" id="PS51722">
    <property type="entry name" value="G_TR_2"/>
    <property type="match status" value="1"/>
</dbReference>
<dbReference type="PROSITE" id="PS01176">
    <property type="entry name" value="IF2"/>
    <property type="match status" value="1"/>
</dbReference>